<proteinExistence type="inferred from homology"/>
<gene>
    <name type="ordered locus">Shewmr4_1179</name>
</gene>
<feature type="chain" id="PRO_1000045068" description="Probable Fe(2+)-trafficking protein">
    <location>
        <begin position="1"/>
        <end position="92"/>
    </location>
</feature>
<sequence>MARTVNCVYLNKEADGLDFQLYPGDLGKRIFDNVSKEAWGLWQKKQTMLINEKKLNMMNVDDRKFLEEQMTSFLFEGKDVEIEGFVPEKGQE</sequence>
<evidence type="ECO:0000255" key="1">
    <source>
        <dbReference type="HAMAP-Rule" id="MF_00686"/>
    </source>
</evidence>
<keyword id="KW-0408">Iron</keyword>
<protein>
    <recommendedName>
        <fullName evidence="1">Probable Fe(2+)-trafficking protein</fullName>
    </recommendedName>
</protein>
<accession>Q0HL08</accession>
<comment type="function">
    <text evidence="1">Could be a mediator in iron transactions between iron acquisition and iron-requiring processes, such as synthesis and/or repair of Fe-S clusters in biosynthetic enzymes.</text>
</comment>
<comment type="similarity">
    <text evidence="1">Belongs to the Fe(2+)-trafficking protein family.</text>
</comment>
<organism>
    <name type="scientific">Shewanella sp. (strain MR-4)</name>
    <dbReference type="NCBI Taxonomy" id="60480"/>
    <lineage>
        <taxon>Bacteria</taxon>
        <taxon>Pseudomonadati</taxon>
        <taxon>Pseudomonadota</taxon>
        <taxon>Gammaproteobacteria</taxon>
        <taxon>Alteromonadales</taxon>
        <taxon>Shewanellaceae</taxon>
        <taxon>Shewanella</taxon>
    </lineage>
</organism>
<dbReference type="EMBL" id="CP000446">
    <property type="protein sequence ID" value="ABI38259.1"/>
    <property type="molecule type" value="Genomic_DNA"/>
</dbReference>
<dbReference type="RefSeq" id="WP_011621967.1">
    <property type="nucleotide sequence ID" value="NC_008321.1"/>
</dbReference>
<dbReference type="SMR" id="Q0HL08"/>
<dbReference type="GeneID" id="94727191"/>
<dbReference type="KEGG" id="she:Shewmr4_1179"/>
<dbReference type="HOGENOM" id="CLU_170994_0_0_6"/>
<dbReference type="GO" id="GO:0005829">
    <property type="term" value="C:cytosol"/>
    <property type="evidence" value="ECO:0007669"/>
    <property type="project" value="TreeGrafter"/>
</dbReference>
<dbReference type="GO" id="GO:0005506">
    <property type="term" value="F:iron ion binding"/>
    <property type="evidence" value="ECO:0007669"/>
    <property type="project" value="UniProtKB-UniRule"/>
</dbReference>
<dbReference type="GO" id="GO:0034599">
    <property type="term" value="P:cellular response to oxidative stress"/>
    <property type="evidence" value="ECO:0007669"/>
    <property type="project" value="TreeGrafter"/>
</dbReference>
<dbReference type="FunFam" id="1.10.3880.10:FF:000001">
    <property type="entry name" value="Probable Fe(2+)-trafficking protein"/>
    <property type="match status" value="1"/>
</dbReference>
<dbReference type="Gene3D" id="1.10.3880.10">
    <property type="entry name" value="Fe(II) trafficking protein YggX"/>
    <property type="match status" value="1"/>
</dbReference>
<dbReference type="HAMAP" id="MF_00686">
    <property type="entry name" value="Fe_traffic_YggX"/>
    <property type="match status" value="1"/>
</dbReference>
<dbReference type="InterPro" id="IPR007457">
    <property type="entry name" value="Fe_traffick_prot_YggX"/>
</dbReference>
<dbReference type="InterPro" id="IPR036766">
    <property type="entry name" value="Fe_traffick_prot_YggX_sf"/>
</dbReference>
<dbReference type="NCBIfam" id="NF003817">
    <property type="entry name" value="PRK05408.1"/>
    <property type="match status" value="1"/>
</dbReference>
<dbReference type="PANTHER" id="PTHR36965">
    <property type="entry name" value="FE(2+)-TRAFFICKING PROTEIN-RELATED"/>
    <property type="match status" value="1"/>
</dbReference>
<dbReference type="PANTHER" id="PTHR36965:SF1">
    <property type="entry name" value="FE(2+)-TRAFFICKING PROTEIN-RELATED"/>
    <property type="match status" value="1"/>
</dbReference>
<dbReference type="Pfam" id="PF04362">
    <property type="entry name" value="Iron_traffic"/>
    <property type="match status" value="1"/>
</dbReference>
<dbReference type="PIRSF" id="PIRSF029827">
    <property type="entry name" value="Fe_traffic_YggX"/>
    <property type="match status" value="1"/>
</dbReference>
<dbReference type="SUPFAM" id="SSF111148">
    <property type="entry name" value="YggX-like"/>
    <property type="match status" value="1"/>
</dbReference>
<reference key="1">
    <citation type="submission" date="2006-08" db="EMBL/GenBank/DDBJ databases">
        <title>Complete sequence of Shewanella sp. MR-4.</title>
        <authorList>
            <consortium name="US DOE Joint Genome Institute"/>
            <person name="Copeland A."/>
            <person name="Lucas S."/>
            <person name="Lapidus A."/>
            <person name="Barry K."/>
            <person name="Detter J.C."/>
            <person name="Glavina del Rio T."/>
            <person name="Hammon N."/>
            <person name="Israni S."/>
            <person name="Dalin E."/>
            <person name="Tice H."/>
            <person name="Pitluck S."/>
            <person name="Kiss H."/>
            <person name="Brettin T."/>
            <person name="Bruce D."/>
            <person name="Han C."/>
            <person name="Tapia R."/>
            <person name="Gilna P."/>
            <person name="Schmutz J."/>
            <person name="Larimer F."/>
            <person name="Land M."/>
            <person name="Hauser L."/>
            <person name="Kyrpides N."/>
            <person name="Mikhailova N."/>
            <person name="Nealson K."/>
            <person name="Konstantinidis K."/>
            <person name="Klappenbach J."/>
            <person name="Tiedje J."/>
            <person name="Richardson P."/>
        </authorList>
    </citation>
    <scope>NUCLEOTIDE SEQUENCE [LARGE SCALE GENOMIC DNA]</scope>
    <source>
        <strain>MR-4</strain>
    </source>
</reference>
<name>FETP_SHESM</name>